<dbReference type="EC" id="2.3.1.234" evidence="1"/>
<dbReference type="EMBL" id="CP000029">
    <property type="protein sequence ID" value="AAW54999.1"/>
    <property type="molecule type" value="Genomic_DNA"/>
</dbReference>
<dbReference type="RefSeq" id="WP_001830015.1">
    <property type="nucleotide sequence ID" value="NC_002976.3"/>
</dbReference>
<dbReference type="SMR" id="Q5HMG7"/>
<dbReference type="STRING" id="176279.SERP1661"/>
<dbReference type="GeneID" id="50018251"/>
<dbReference type="KEGG" id="ser:SERP1661"/>
<dbReference type="eggNOG" id="COG0533">
    <property type="taxonomic scope" value="Bacteria"/>
</dbReference>
<dbReference type="HOGENOM" id="CLU_023208_0_2_9"/>
<dbReference type="Proteomes" id="UP000000531">
    <property type="component" value="Chromosome"/>
</dbReference>
<dbReference type="GO" id="GO:0005737">
    <property type="term" value="C:cytoplasm"/>
    <property type="evidence" value="ECO:0007669"/>
    <property type="project" value="UniProtKB-SubCell"/>
</dbReference>
<dbReference type="GO" id="GO:0005506">
    <property type="term" value="F:iron ion binding"/>
    <property type="evidence" value="ECO:0007669"/>
    <property type="project" value="UniProtKB-UniRule"/>
</dbReference>
<dbReference type="GO" id="GO:0061711">
    <property type="term" value="F:N(6)-L-threonylcarbamoyladenine synthase activity"/>
    <property type="evidence" value="ECO:0007669"/>
    <property type="project" value="UniProtKB-EC"/>
</dbReference>
<dbReference type="GO" id="GO:0002949">
    <property type="term" value="P:tRNA threonylcarbamoyladenosine modification"/>
    <property type="evidence" value="ECO:0007669"/>
    <property type="project" value="UniProtKB-UniRule"/>
</dbReference>
<dbReference type="CDD" id="cd24133">
    <property type="entry name" value="ASKHA_NBD_TsaD_bac"/>
    <property type="match status" value="1"/>
</dbReference>
<dbReference type="FunFam" id="3.30.420.40:FF:000012">
    <property type="entry name" value="tRNA N6-adenosine threonylcarbamoyltransferase"/>
    <property type="match status" value="1"/>
</dbReference>
<dbReference type="FunFam" id="3.30.420.40:FF:000040">
    <property type="entry name" value="tRNA N6-adenosine threonylcarbamoyltransferase"/>
    <property type="match status" value="1"/>
</dbReference>
<dbReference type="Gene3D" id="3.30.420.40">
    <property type="match status" value="2"/>
</dbReference>
<dbReference type="HAMAP" id="MF_01445">
    <property type="entry name" value="TsaD"/>
    <property type="match status" value="1"/>
</dbReference>
<dbReference type="InterPro" id="IPR043129">
    <property type="entry name" value="ATPase_NBD"/>
</dbReference>
<dbReference type="InterPro" id="IPR000905">
    <property type="entry name" value="Gcp-like_dom"/>
</dbReference>
<dbReference type="InterPro" id="IPR017861">
    <property type="entry name" value="KAE1/TsaD"/>
</dbReference>
<dbReference type="InterPro" id="IPR017860">
    <property type="entry name" value="Peptidase_M22_CS"/>
</dbReference>
<dbReference type="InterPro" id="IPR022450">
    <property type="entry name" value="TsaD"/>
</dbReference>
<dbReference type="NCBIfam" id="TIGR00329">
    <property type="entry name" value="gcp_kae1"/>
    <property type="match status" value="1"/>
</dbReference>
<dbReference type="NCBIfam" id="TIGR03723">
    <property type="entry name" value="T6A_TsaD_YgjD"/>
    <property type="match status" value="1"/>
</dbReference>
<dbReference type="PANTHER" id="PTHR11735">
    <property type="entry name" value="TRNA N6-ADENOSINE THREONYLCARBAMOYLTRANSFERASE"/>
    <property type="match status" value="1"/>
</dbReference>
<dbReference type="PANTHER" id="PTHR11735:SF6">
    <property type="entry name" value="TRNA N6-ADENOSINE THREONYLCARBAMOYLTRANSFERASE, MITOCHONDRIAL"/>
    <property type="match status" value="1"/>
</dbReference>
<dbReference type="Pfam" id="PF00814">
    <property type="entry name" value="TsaD"/>
    <property type="match status" value="1"/>
</dbReference>
<dbReference type="PRINTS" id="PR00789">
    <property type="entry name" value="OSIALOPTASE"/>
</dbReference>
<dbReference type="SUPFAM" id="SSF53067">
    <property type="entry name" value="Actin-like ATPase domain"/>
    <property type="match status" value="2"/>
</dbReference>
<dbReference type="PROSITE" id="PS01016">
    <property type="entry name" value="GLYCOPROTEASE"/>
    <property type="match status" value="1"/>
</dbReference>
<comment type="function">
    <text evidence="1">Required for the formation of a threonylcarbamoyl group on adenosine at position 37 (t(6)A37) in tRNAs that read codons beginning with adenine. Is involved in the transfer of the threonylcarbamoyl moiety of threonylcarbamoyl-AMP (TC-AMP) to the N6 group of A37, together with TsaE and TsaB. TsaD likely plays a direct catalytic role in this reaction.</text>
</comment>
<comment type="catalytic activity">
    <reaction evidence="1">
        <text>L-threonylcarbamoyladenylate + adenosine(37) in tRNA = N(6)-L-threonylcarbamoyladenosine(37) in tRNA + AMP + H(+)</text>
        <dbReference type="Rhea" id="RHEA:37059"/>
        <dbReference type="Rhea" id="RHEA-COMP:10162"/>
        <dbReference type="Rhea" id="RHEA-COMP:10163"/>
        <dbReference type="ChEBI" id="CHEBI:15378"/>
        <dbReference type="ChEBI" id="CHEBI:73682"/>
        <dbReference type="ChEBI" id="CHEBI:74411"/>
        <dbReference type="ChEBI" id="CHEBI:74418"/>
        <dbReference type="ChEBI" id="CHEBI:456215"/>
        <dbReference type="EC" id="2.3.1.234"/>
    </reaction>
</comment>
<comment type="cofactor">
    <cofactor evidence="1">
        <name>Fe(2+)</name>
        <dbReference type="ChEBI" id="CHEBI:29033"/>
    </cofactor>
    <text evidence="1">Binds 1 Fe(2+) ion per subunit.</text>
</comment>
<comment type="subcellular location">
    <subcellularLocation>
        <location evidence="1">Cytoplasm</location>
    </subcellularLocation>
</comment>
<comment type="similarity">
    <text evidence="1">Belongs to the KAE1 / TsaD family.</text>
</comment>
<accession>Q5HMG7</accession>
<evidence type="ECO:0000255" key="1">
    <source>
        <dbReference type="HAMAP-Rule" id="MF_01445"/>
    </source>
</evidence>
<reference key="1">
    <citation type="journal article" date="2005" name="J. Bacteriol.">
        <title>Insights on evolution of virulence and resistance from the complete genome analysis of an early methicillin-resistant Staphylococcus aureus strain and a biofilm-producing methicillin-resistant Staphylococcus epidermidis strain.</title>
        <authorList>
            <person name="Gill S.R."/>
            <person name="Fouts D.E."/>
            <person name="Archer G.L."/>
            <person name="Mongodin E.F."/>
            <person name="DeBoy R.T."/>
            <person name="Ravel J."/>
            <person name="Paulsen I.T."/>
            <person name="Kolonay J.F."/>
            <person name="Brinkac L.M."/>
            <person name="Beanan M.J."/>
            <person name="Dodson R.J."/>
            <person name="Daugherty S.C."/>
            <person name="Madupu R."/>
            <person name="Angiuoli S.V."/>
            <person name="Durkin A.S."/>
            <person name="Haft D.H."/>
            <person name="Vamathevan J.J."/>
            <person name="Khouri H."/>
            <person name="Utterback T.R."/>
            <person name="Lee C."/>
            <person name="Dimitrov G."/>
            <person name="Jiang L."/>
            <person name="Qin H."/>
            <person name="Weidman J."/>
            <person name="Tran K."/>
            <person name="Kang K.H."/>
            <person name="Hance I.R."/>
            <person name="Nelson K.E."/>
            <person name="Fraser C.M."/>
        </authorList>
    </citation>
    <scope>NUCLEOTIDE SEQUENCE [LARGE SCALE GENOMIC DNA]</scope>
    <source>
        <strain>ATCC 35984 / DSM 28319 / BCRC 17069 / CCUG 31568 / BM 3577 / RP62A</strain>
    </source>
</reference>
<protein>
    <recommendedName>
        <fullName evidence="1">tRNA N6-adenosine threonylcarbamoyltransferase</fullName>
        <ecNumber evidence="1">2.3.1.234</ecNumber>
    </recommendedName>
    <alternativeName>
        <fullName evidence="1">N6-L-threonylcarbamoyladenine synthase</fullName>
        <shortName evidence="1">t(6)A synthase</shortName>
    </alternativeName>
    <alternativeName>
        <fullName evidence="1">t(6)A37 threonylcarbamoyladenosine biosynthesis protein TsaD</fullName>
    </alternativeName>
    <alternativeName>
        <fullName evidence="1">tRNA threonylcarbamoyladenosine biosynthesis protein TsaD</fullName>
    </alternativeName>
</protein>
<feature type="chain" id="PRO_0000303554" description="tRNA N6-adenosine threonylcarbamoyltransferase">
    <location>
        <begin position="1"/>
        <end position="340"/>
    </location>
</feature>
<feature type="binding site" evidence="1">
    <location>
        <position position="115"/>
    </location>
    <ligand>
        <name>Fe cation</name>
        <dbReference type="ChEBI" id="CHEBI:24875"/>
    </ligand>
</feature>
<feature type="binding site" evidence="1">
    <location>
        <position position="119"/>
    </location>
    <ligand>
        <name>Fe cation</name>
        <dbReference type="ChEBI" id="CHEBI:24875"/>
    </ligand>
</feature>
<feature type="binding site" evidence="1">
    <location>
        <begin position="137"/>
        <end position="141"/>
    </location>
    <ligand>
        <name>substrate</name>
    </ligand>
</feature>
<feature type="binding site" evidence="1">
    <location>
        <position position="170"/>
    </location>
    <ligand>
        <name>substrate</name>
    </ligand>
</feature>
<feature type="binding site" evidence="1">
    <location>
        <position position="183"/>
    </location>
    <ligand>
        <name>substrate</name>
    </ligand>
</feature>
<feature type="binding site" evidence="1">
    <location>
        <position position="187"/>
    </location>
    <ligand>
        <name>substrate</name>
    </ligand>
</feature>
<feature type="binding site" evidence="1">
    <location>
        <position position="276"/>
    </location>
    <ligand>
        <name>substrate</name>
    </ligand>
</feature>
<feature type="binding site" evidence="1">
    <location>
        <position position="304"/>
    </location>
    <ligand>
        <name>Fe cation</name>
        <dbReference type="ChEBI" id="CHEBI:24875"/>
    </ligand>
</feature>
<name>TSAD_STAEQ</name>
<keyword id="KW-0012">Acyltransferase</keyword>
<keyword id="KW-0963">Cytoplasm</keyword>
<keyword id="KW-0408">Iron</keyword>
<keyword id="KW-0479">Metal-binding</keyword>
<keyword id="KW-1185">Reference proteome</keyword>
<keyword id="KW-0808">Transferase</keyword>
<keyword id="KW-0819">tRNA processing</keyword>
<gene>
    <name evidence="1" type="primary">tsaD</name>
    <name type="synonym">gcp</name>
    <name type="ordered locus">SERP1661</name>
</gene>
<proteinExistence type="inferred from homology"/>
<sequence>MTNNKLILAIETSCDETSVSVIKNGTELLSNTVLSQIDSHKRFGGVVPEVASRHHVEGITATIDESLVSAKVKMEDIDAIAVTQGPGLIGALLIGINAAKALAFAYDKPIIPVHHIAGHIYANHLEQPLTFPLMSLIVSGGHTELVYMKNHLDFEVIGETRDDAVGEAYDKVARTINLPYPGGPHIDRLAAKGKDVYDFPRVWLEKDSYDFSFSGLKSAVINKLHNLRQKNIEIVAEDVATSFQNSVVEVLTYKAIHACKTYNVNRLIVAGGVASNKGLRNALSEACKKEGIHLTIPSPVLCTDNAAMIGAAGYYLYQAGLRGDLALNGQNNIDIETFSV</sequence>
<organism>
    <name type="scientific">Staphylococcus epidermidis (strain ATCC 35984 / DSM 28319 / BCRC 17069 / CCUG 31568 / BM 3577 / RP62A)</name>
    <dbReference type="NCBI Taxonomy" id="176279"/>
    <lineage>
        <taxon>Bacteria</taxon>
        <taxon>Bacillati</taxon>
        <taxon>Bacillota</taxon>
        <taxon>Bacilli</taxon>
        <taxon>Bacillales</taxon>
        <taxon>Staphylococcaceae</taxon>
        <taxon>Staphylococcus</taxon>
    </lineage>
</organism>